<sequence>MSTEPTNQDQAPIDEALTQEVAQDEASLMDELTQANFRVEELEQLLAESQAALAERKDVEMRAAAETQNIRTRAAKDVEQARKFALEKFANELLPVIDNMERALQGTNPEDEATKAIYEGVELTMKGFLTSVEKFGVKQVNPQGETFNPDHHQAIGMQPSPDFPANTVMMVMQKGYLLNDRLLRPAMVMVSQGGPSVDIEA</sequence>
<keyword id="KW-0143">Chaperone</keyword>
<keyword id="KW-0963">Cytoplasm</keyword>
<keyword id="KW-1185">Reference proteome</keyword>
<keyword id="KW-0346">Stress response</keyword>
<gene>
    <name evidence="1" type="primary">grpE</name>
    <name type="ordered locus">Sden_2572</name>
</gene>
<dbReference type="EMBL" id="CP000302">
    <property type="protein sequence ID" value="ABE55851.1"/>
    <property type="molecule type" value="Genomic_DNA"/>
</dbReference>
<dbReference type="RefSeq" id="WP_011497002.1">
    <property type="nucleotide sequence ID" value="NC_007954.1"/>
</dbReference>
<dbReference type="SMR" id="Q12L25"/>
<dbReference type="STRING" id="318161.Sden_2572"/>
<dbReference type="KEGG" id="sdn:Sden_2572"/>
<dbReference type="eggNOG" id="COG0576">
    <property type="taxonomic scope" value="Bacteria"/>
</dbReference>
<dbReference type="HOGENOM" id="CLU_057217_6_0_6"/>
<dbReference type="OrthoDB" id="9789811at2"/>
<dbReference type="Proteomes" id="UP000001982">
    <property type="component" value="Chromosome"/>
</dbReference>
<dbReference type="GO" id="GO:0005829">
    <property type="term" value="C:cytosol"/>
    <property type="evidence" value="ECO:0007669"/>
    <property type="project" value="TreeGrafter"/>
</dbReference>
<dbReference type="GO" id="GO:0000774">
    <property type="term" value="F:adenyl-nucleotide exchange factor activity"/>
    <property type="evidence" value="ECO:0007669"/>
    <property type="project" value="InterPro"/>
</dbReference>
<dbReference type="GO" id="GO:0042803">
    <property type="term" value="F:protein homodimerization activity"/>
    <property type="evidence" value="ECO:0007669"/>
    <property type="project" value="InterPro"/>
</dbReference>
<dbReference type="GO" id="GO:0051087">
    <property type="term" value="F:protein-folding chaperone binding"/>
    <property type="evidence" value="ECO:0007669"/>
    <property type="project" value="InterPro"/>
</dbReference>
<dbReference type="GO" id="GO:0051082">
    <property type="term" value="F:unfolded protein binding"/>
    <property type="evidence" value="ECO:0007669"/>
    <property type="project" value="TreeGrafter"/>
</dbReference>
<dbReference type="GO" id="GO:0006457">
    <property type="term" value="P:protein folding"/>
    <property type="evidence" value="ECO:0007669"/>
    <property type="project" value="InterPro"/>
</dbReference>
<dbReference type="CDD" id="cd00446">
    <property type="entry name" value="GrpE"/>
    <property type="match status" value="1"/>
</dbReference>
<dbReference type="FunFam" id="2.30.22.10:FF:000001">
    <property type="entry name" value="Protein GrpE"/>
    <property type="match status" value="1"/>
</dbReference>
<dbReference type="Gene3D" id="3.90.20.20">
    <property type="match status" value="1"/>
</dbReference>
<dbReference type="Gene3D" id="2.30.22.10">
    <property type="entry name" value="Head domain of nucleotide exchange factor GrpE"/>
    <property type="match status" value="1"/>
</dbReference>
<dbReference type="HAMAP" id="MF_01151">
    <property type="entry name" value="GrpE"/>
    <property type="match status" value="1"/>
</dbReference>
<dbReference type="InterPro" id="IPR000740">
    <property type="entry name" value="GrpE"/>
</dbReference>
<dbReference type="InterPro" id="IPR013805">
    <property type="entry name" value="GrpE_coiled_coil"/>
</dbReference>
<dbReference type="InterPro" id="IPR009012">
    <property type="entry name" value="GrpE_head"/>
</dbReference>
<dbReference type="NCBIfam" id="NF010737">
    <property type="entry name" value="PRK14139.1"/>
    <property type="match status" value="1"/>
</dbReference>
<dbReference type="NCBIfam" id="NF010738">
    <property type="entry name" value="PRK14140.1"/>
    <property type="match status" value="1"/>
</dbReference>
<dbReference type="NCBIfam" id="NF010748">
    <property type="entry name" value="PRK14150.1"/>
    <property type="match status" value="1"/>
</dbReference>
<dbReference type="PANTHER" id="PTHR21237">
    <property type="entry name" value="GRPE PROTEIN"/>
    <property type="match status" value="1"/>
</dbReference>
<dbReference type="PANTHER" id="PTHR21237:SF23">
    <property type="entry name" value="GRPE PROTEIN HOMOLOG, MITOCHONDRIAL"/>
    <property type="match status" value="1"/>
</dbReference>
<dbReference type="Pfam" id="PF01025">
    <property type="entry name" value="GrpE"/>
    <property type="match status" value="1"/>
</dbReference>
<dbReference type="PRINTS" id="PR00773">
    <property type="entry name" value="GRPEPROTEIN"/>
</dbReference>
<dbReference type="SUPFAM" id="SSF58014">
    <property type="entry name" value="Coiled-coil domain of nucleotide exchange factor GrpE"/>
    <property type="match status" value="1"/>
</dbReference>
<dbReference type="SUPFAM" id="SSF51064">
    <property type="entry name" value="Head domain of nucleotide exchange factor GrpE"/>
    <property type="match status" value="1"/>
</dbReference>
<dbReference type="PROSITE" id="PS01071">
    <property type="entry name" value="GRPE"/>
    <property type="match status" value="1"/>
</dbReference>
<reference key="1">
    <citation type="submission" date="2006-03" db="EMBL/GenBank/DDBJ databases">
        <title>Complete sequence of Shewanella denitrificans OS217.</title>
        <authorList>
            <consortium name="US DOE Joint Genome Institute"/>
            <person name="Copeland A."/>
            <person name="Lucas S."/>
            <person name="Lapidus A."/>
            <person name="Barry K."/>
            <person name="Detter J.C."/>
            <person name="Glavina del Rio T."/>
            <person name="Hammon N."/>
            <person name="Israni S."/>
            <person name="Dalin E."/>
            <person name="Tice H."/>
            <person name="Pitluck S."/>
            <person name="Brettin T."/>
            <person name="Bruce D."/>
            <person name="Han C."/>
            <person name="Tapia R."/>
            <person name="Gilna P."/>
            <person name="Kiss H."/>
            <person name="Schmutz J."/>
            <person name="Larimer F."/>
            <person name="Land M."/>
            <person name="Hauser L."/>
            <person name="Kyrpides N."/>
            <person name="Lykidis A."/>
            <person name="Richardson P."/>
        </authorList>
    </citation>
    <scope>NUCLEOTIDE SEQUENCE [LARGE SCALE GENOMIC DNA]</scope>
    <source>
        <strain>OS217 / ATCC BAA-1090 / DSM 15013</strain>
    </source>
</reference>
<protein>
    <recommendedName>
        <fullName evidence="1">Protein GrpE</fullName>
    </recommendedName>
    <alternativeName>
        <fullName evidence="1">HSP-70 cofactor</fullName>
    </alternativeName>
</protein>
<accession>Q12L25</accession>
<organism>
    <name type="scientific">Shewanella denitrificans (strain OS217 / ATCC BAA-1090 / DSM 15013)</name>
    <dbReference type="NCBI Taxonomy" id="318161"/>
    <lineage>
        <taxon>Bacteria</taxon>
        <taxon>Pseudomonadati</taxon>
        <taxon>Pseudomonadota</taxon>
        <taxon>Gammaproteobacteria</taxon>
        <taxon>Alteromonadales</taxon>
        <taxon>Shewanellaceae</taxon>
        <taxon>Shewanella</taxon>
    </lineage>
</organism>
<name>GRPE_SHEDO</name>
<evidence type="ECO:0000255" key="1">
    <source>
        <dbReference type="HAMAP-Rule" id="MF_01151"/>
    </source>
</evidence>
<comment type="function">
    <text evidence="1">Participates actively in the response to hyperosmotic and heat shock by preventing the aggregation of stress-denatured proteins, in association with DnaK and GrpE. It is the nucleotide exchange factor for DnaK and may function as a thermosensor. Unfolded proteins bind initially to DnaJ; upon interaction with the DnaJ-bound protein, DnaK hydrolyzes its bound ATP, resulting in the formation of a stable complex. GrpE releases ADP from DnaK; ATP binding to DnaK triggers the release of the substrate protein, thus completing the reaction cycle. Several rounds of ATP-dependent interactions between DnaJ, DnaK and GrpE are required for fully efficient folding.</text>
</comment>
<comment type="subunit">
    <text evidence="1">Homodimer.</text>
</comment>
<comment type="subcellular location">
    <subcellularLocation>
        <location evidence="1">Cytoplasm</location>
    </subcellularLocation>
</comment>
<comment type="similarity">
    <text evidence="1">Belongs to the GrpE family.</text>
</comment>
<proteinExistence type="inferred from homology"/>
<feature type="chain" id="PRO_1000137619" description="Protein GrpE">
    <location>
        <begin position="1"/>
        <end position="201"/>
    </location>
</feature>